<organism>
    <name type="scientific">Xenopus laevis</name>
    <name type="common">African clawed frog</name>
    <dbReference type="NCBI Taxonomy" id="8355"/>
    <lineage>
        <taxon>Eukaryota</taxon>
        <taxon>Metazoa</taxon>
        <taxon>Chordata</taxon>
        <taxon>Craniata</taxon>
        <taxon>Vertebrata</taxon>
        <taxon>Euteleostomi</taxon>
        <taxon>Amphibia</taxon>
        <taxon>Batrachia</taxon>
        <taxon>Anura</taxon>
        <taxon>Pipoidea</taxon>
        <taxon>Pipidae</taxon>
        <taxon>Xenopodinae</taxon>
        <taxon>Xenopus</taxon>
        <taxon>Xenopus</taxon>
    </lineage>
</organism>
<sequence>MMPAMRASLILGCLLIIGPWAILAENPLPTIFPDKDELVQALHSSFTLKCTGESEVSWQNPNSNPEKQNVVIRSEENNSGLFVSILEVSDASAFDTGLYTCYHNHTQTEESEIEGTDIYIYVPDPNVPFAPPGLFDHIIVVEEDESALVPCRTTDPSSEVTLKNIESSRTVFAFYDSKQGFAGNFPPGSYICETTSNKMVYQTEPYILQTWKATHNISVEMEAPKTMFRAGETIAIDCIVLDNEVVDLKWTYPGKQRGVGIRNVEESKVPYQRLVYTLTLANATTEDSGEYECAVIHATLDNRVVKKTNITVHEKGFIDLEPMFGSEEFANLHEVKSFIVNLHAYPTPGLFWLKDNRTLSENLTEITTSIVTTKETRFQSKLKLIRAKEEDSGLYTLVAQNDRETKSYSFILQIKVPALILELVDKHHGASGEQTVGCLAKGMPVPDVEWLVCKDIKRCNNDTLWSILATNGSEISMETHQDDEQIESQVTFKKIEETMAIRCIAKNELGVVARELKLVAPTLRSELTVAAAVLVLLVIVIISLIVLVIIWKQKPRYEIRWRVIESISPDGHEYIYVDPMQLPYDSRWEFPRDGLVLGRILGSGAFGKVVEGAAYGLSRSQPVMKVAVKMLKPTARSSEKQALMSELKIMTHLGAHLNIVNLLGACTKSGPIYIITEYCFYGDLVNYLHKNRDNFQSRHPEKPKKDLDIFGLNPADESTRSYVILSFENNGDYMDMKQADTMQYVPMLEMKEPSKYSDIQRSLYDRPASYKKKPLSEVKNILSDDGFEGLTVLDLLSFTYQVARGMEFLASKNCVHRDLAARNVLLAHGKIVKICDFGLARDIMHDSNYVSKGSTFLPVKWMAPESIFDNLYTTLSDVWSFGILLWEIFSLGGTPYPGMIVDSTFYNKIKSGYRMAKPDHATHEVYDIMVKCWNSEPEKRPSFRHLSDIVESLLPMEYKRCYETVLHDFLKSDHPAVTRMRSDSDNSYIGVTYKNEHKMKDRESGFDEQRLSADSGYIIPLPDIDPVSEDESGKRNRHSSQTSEESAIETGSSSSTFIKRDDETIEDIDMMDDIGIDSSDLVEDSFL</sequence>
<accession>P26619</accession>
<protein>
    <recommendedName>
        <fullName>Platelet-derived growth factor receptor alpha</fullName>
        <shortName>PDGF-R-alpha</shortName>
        <shortName>PDGFR-alpha</shortName>
        <ecNumber>2.7.10.1</ecNumber>
    </recommendedName>
    <alternativeName>
        <fullName>Alpha platelet-derived growth factor receptor</fullName>
    </alternativeName>
    <alternativeName>
        <fullName>Alpha-type platelet-derived growth factor receptor</fullName>
    </alternativeName>
</protein>
<keyword id="KW-0067">ATP-binding</keyword>
<keyword id="KW-1003">Cell membrane</keyword>
<keyword id="KW-0966">Cell projection</keyword>
<keyword id="KW-0145">Chemotaxis</keyword>
<keyword id="KW-0217">Developmental protein</keyword>
<keyword id="KW-1015">Disulfide bond</keyword>
<keyword id="KW-0325">Glycoprotein</keyword>
<keyword id="KW-0333">Golgi apparatus</keyword>
<keyword id="KW-0393">Immunoglobulin domain</keyword>
<keyword id="KW-0418">Kinase</keyword>
<keyword id="KW-0472">Membrane</keyword>
<keyword id="KW-0547">Nucleotide-binding</keyword>
<keyword id="KW-0597">Phosphoprotein</keyword>
<keyword id="KW-0675">Receptor</keyword>
<keyword id="KW-1185">Reference proteome</keyword>
<keyword id="KW-0677">Repeat</keyword>
<keyword id="KW-0732">Signal</keyword>
<keyword id="KW-0808">Transferase</keyword>
<keyword id="KW-0812">Transmembrane</keyword>
<keyword id="KW-1133">Transmembrane helix</keyword>
<keyword id="KW-0829">Tyrosine-protein kinase</keyword>
<keyword id="KW-0832">Ubl conjugation</keyword>
<gene>
    <name type="primary">pdgfra</name>
</gene>
<proteinExistence type="evidence at transcript level"/>
<dbReference type="EC" id="2.7.10.1"/>
<dbReference type="EMBL" id="M80798">
    <property type="protein sequence ID" value="AAA49929.1"/>
    <property type="molecule type" value="mRNA"/>
</dbReference>
<dbReference type="PIR" id="I51552">
    <property type="entry name" value="I51552"/>
</dbReference>
<dbReference type="SMR" id="P26619"/>
<dbReference type="GlyCosmos" id="P26619">
    <property type="glycosylation" value="9 sites, No reported glycans"/>
</dbReference>
<dbReference type="AGR" id="Xenbase:XB-GENE-6072934"/>
<dbReference type="Xenbase" id="XB-GENE-6072934">
    <property type="gene designation" value="pdgfra.L"/>
</dbReference>
<dbReference type="BRENDA" id="2.7.10.1">
    <property type="organism ID" value="6725"/>
</dbReference>
<dbReference type="Proteomes" id="UP000186698">
    <property type="component" value="Unplaced"/>
</dbReference>
<dbReference type="GO" id="GO:0005929">
    <property type="term" value="C:cilium"/>
    <property type="evidence" value="ECO:0000250"/>
    <property type="project" value="UniProtKB"/>
</dbReference>
<dbReference type="GO" id="GO:0005794">
    <property type="term" value="C:Golgi apparatus"/>
    <property type="evidence" value="ECO:0000250"/>
    <property type="project" value="UniProtKB"/>
</dbReference>
<dbReference type="GO" id="GO:0005886">
    <property type="term" value="C:plasma membrane"/>
    <property type="evidence" value="ECO:0000318"/>
    <property type="project" value="GO_Central"/>
</dbReference>
<dbReference type="GO" id="GO:0043235">
    <property type="term" value="C:receptor complex"/>
    <property type="evidence" value="ECO:0000318"/>
    <property type="project" value="GO_Central"/>
</dbReference>
<dbReference type="GO" id="GO:0005524">
    <property type="term" value="F:ATP binding"/>
    <property type="evidence" value="ECO:0007669"/>
    <property type="project" value="UniProtKB-KW"/>
</dbReference>
<dbReference type="GO" id="GO:0005018">
    <property type="term" value="F:platelet-derived growth factor alpha-receptor activity"/>
    <property type="evidence" value="ECO:0000318"/>
    <property type="project" value="GO_Central"/>
</dbReference>
<dbReference type="GO" id="GO:0048407">
    <property type="term" value="F:platelet-derived growth factor binding"/>
    <property type="evidence" value="ECO:0000318"/>
    <property type="project" value="GO_Central"/>
</dbReference>
<dbReference type="GO" id="GO:0016477">
    <property type="term" value="P:cell migration"/>
    <property type="evidence" value="ECO:0000318"/>
    <property type="project" value="GO_Central"/>
</dbReference>
<dbReference type="GO" id="GO:0007169">
    <property type="term" value="P:cell surface receptor protein tyrosine kinase signaling pathway"/>
    <property type="evidence" value="ECO:0000318"/>
    <property type="project" value="GO_Central"/>
</dbReference>
<dbReference type="GO" id="GO:0006935">
    <property type="term" value="P:chemotaxis"/>
    <property type="evidence" value="ECO:0007669"/>
    <property type="project" value="UniProtKB-KW"/>
</dbReference>
<dbReference type="GO" id="GO:0048701">
    <property type="term" value="P:embryonic cranial skeleton morphogenesis"/>
    <property type="evidence" value="ECO:0000318"/>
    <property type="project" value="GO_Central"/>
</dbReference>
<dbReference type="GO" id="GO:0008284">
    <property type="term" value="P:positive regulation of cell population proliferation"/>
    <property type="evidence" value="ECO:0000318"/>
    <property type="project" value="GO_Central"/>
</dbReference>
<dbReference type="CDD" id="cd05859">
    <property type="entry name" value="Ig4_PDGFR"/>
    <property type="match status" value="1"/>
</dbReference>
<dbReference type="CDD" id="cd05861">
    <property type="entry name" value="IgI_PDGFR-alphabeta"/>
    <property type="match status" value="1"/>
</dbReference>
<dbReference type="CDD" id="cd05105">
    <property type="entry name" value="PTKc_PDGFR_alpha"/>
    <property type="match status" value="1"/>
</dbReference>
<dbReference type="FunFam" id="2.60.40.10:FF:000720">
    <property type="entry name" value="Platelet-derived growth factor receptor alpha"/>
    <property type="match status" value="1"/>
</dbReference>
<dbReference type="FunFam" id="2.60.40.10:FF:000725">
    <property type="entry name" value="Platelet-derived growth factor receptor alpha"/>
    <property type="match status" value="1"/>
</dbReference>
<dbReference type="FunFam" id="2.60.40.10:FF:000832">
    <property type="entry name" value="Platelet-derived growth factor receptor alpha"/>
    <property type="match status" value="1"/>
</dbReference>
<dbReference type="FunFam" id="3.30.200.20:FF:000025">
    <property type="entry name" value="Platelet-derived growth factor receptor alpha"/>
    <property type="match status" value="1"/>
</dbReference>
<dbReference type="FunFam" id="1.10.510.10:FF:000140">
    <property type="entry name" value="Platelet-derived growth factor receptor beta"/>
    <property type="match status" value="1"/>
</dbReference>
<dbReference type="FunFam" id="2.60.40.10:FF:000223">
    <property type="entry name" value="Platelet-derived growth factor receptor beta"/>
    <property type="match status" value="1"/>
</dbReference>
<dbReference type="Gene3D" id="2.60.40.10">
    <property type="entry name" value="Immunoglobulins"/>
    <property type="match status" value="5"/>
</dbReference>
<dbReference type="Gene3D" id="3.30.200.20">
    <property type="entry name" value="Phosphorylase Kinase, domain 1"/>
    <property type="match status" value="1"/>
</dbReference>
<dbReference type="Gene3D" id="1.10.510.10">
    <property type="entry name" value="Transferase(Phosphotransferase) domain 1"/>
    <property type="match status" value="1"/>
</dbReference>
<dbReference type="InterPro" id="IPR007110">
    <property type="entry name" value="Ig-like_dom"/>
</dbReference>
<dbReference type="InterPro" id="IPR036179">
    <property type="entry name" value="Ig-like_dom_sf"/>
</dbReference>
<dbReference type="InterPro" id="IPR013783">
    <property type="entry name" value="Ig-like_fold"/>
</dbReference>
<dbReference type="InterPro" id="IPR013098">
    <property type="entry name" value="Ig_I-set"/>
</dbReference>
<dbReference type="InterPro" id="IPR003599">
    <property type="entry name" value="Ig_sub"/>
</dbReference>
<dbReference type="InterPro" id="IPR003598">
    <property type="entry name" value="Ig_sub2"/>
</dbReference>
<dbReference type="InterPro" id="IPR011009">
    <property type="entry name" value="Kinase-like_dom_sf"/>
</dbReference>
<dbReference type="InterPro" id="IPR027290">
    <property type="entry name" value="PDGFRA"/>
</dbReference>
<dbReference type="InterPro" id="IPR000719">
    <property type="entry name" value="Prot_kinase_dom"/>
</dbReference>
<dbReference type="InterPro" id="IPR017441">
    <property type="entry name" value="Protein_kinase_ATP_BS"/>
</dbReference>
<dbReference type="InterPro" id="IPR050122">
    <property type="entry name" value="RTK"/>
</dbReference>
<dbReference type="InterPro" id="IPR001245">
    <property type="entry name" value="Ser-Thr/Tyr_kinase_cat_dom"/>
</dbReference>
<dbReference type="InterPro" id="IPR008266">
    <property type="entry name" value="Tyr_kinase_AS"/>
</dbReference>
<dbReference type="InterPro" id="IPR020635">
    <property type="entry name" value="Tyr_kinase_cat_dom"/>
</dbReference>
<dbReference type="InterPro" id="IPR001824">
    <property type="entry name" value="Tyr_kinase_rcpt_3_CS"/>
</dbReference>
<dbReference type="PANTHER" id="PTHR24416:SF52">
    <property type="entry name" value="PLATELET-DERIVED GROWTH FACTOR RECEPTOR ALPHA"/>
    <property type="match status" value="1"/>
</dbReference>
<dbReference type="PANTHER" id="PTHR24416">
    <property type="entry name" value="TYROSINE-PROTEIN KINASE RECEPTOR"/>
    <property type="match status" value="1"/>
</dbReference>
<dbReference type="Pfam" id="PF07679">
    <property type="entry name" value="I-set"/>
    <property type="match status" value="2"/>
</dbReference>
<dbReference type="Pfam" id="PF25305">
    <property type="entry name" value="Ig_PDGFR_d4"/>
    <property type="match status" value="1"/>
</dbReference>
<dbReference type="Pfam" id="PF07714">
    <property type="entry name" value="PK_Tyr_Ser-Thr"/>
    <property type="match status" value="1"/>
</dbReference>
<dbReference type="PIRSF" id="PIRSF500950">
    <property type="entry name" value="Alpha-PDGF_receptor"/>
    <property type="match status" value="1"/>
</dbReference>
<dbReference type="PIRSF" id="PIRSF000615">
    <property type="entry name" value="TyrPK_CSF1-R"/>
    <property type="match status" value="1"/>
</dbReference>
<dbReference type="PRINTS" id="PR01832">
    <property type="entry name" value="VEGFRECEPTOR"/>
</dbReference>
<dbReference type="SMART" id="SM00409">
    <property type="entry name" value="IG"/>
    <property type="match status" value="3"/>
</dbReference>
<dbReference type="SMART" id="SM00408">
    <property type="entry name" value="IGc2"/>
    <property type="match status" value="3"/>
</dbReference>
<dbReference type="SMART" id="SM00220">
    <property type="entry name" value="S_TKc"/>
    <property type="match status" value="1"/>
</dbReference>
<dbReference type="SMART" id="SM00219">
    <property type="entry name" value="TyrKc"/>
    <property type="match status" value="1"/>
</dbReference>
<dbReference type="SUPFAM" id="SSF48726">
    <property type="entry name" value="Immunoglobulin"/>
    <property type="match status" value="3"/>
</dbReference>
<dbReference type="SUPFAM" id="SSF56112">
    <property type="entry name" value="Protein kinase-like (PK-like)"/>
    <property type="match status" value="1"/>
</dbReference>
<dbReference type="PROSITE" id="PS50835">
    <property type="entry name" value="IG_LIKE"/>
    <property type="match status" value="3"/>
</dbReference>
<dbReference type="PROSITE" id="PS00107">
    <property type="entry name" value="PROTEIN_KINASE_ATP"/>
    <property type="match status" value="1"/>
</dbReference>
<dbReference type="PROSITE" id="PS50011">
    <property type="entry name" value="PROTEIN_KINASE_DOM"/>
    <property type="match status" value="1"/>
</dbReference>
<dbReference type="PROSITE" id="PS00109">
    <property type="entry name" value="PROTEIN_KINASE_TYR"/>
    <property type="match status" value="1"/>
</dbReference>
<dbReference type="PROSITE" id="PS00240">
    <property type="entry name" value="RECEPTOR_TYR_KIN_III"/>
    <property type="match status" value="1"/>
</dbReference>
<evidence type="ECO:0000250" key="1"/>
<evidence type="ECO:0000250" key="2">
    <source>
        <dbReference type="UniProtKB" id="P16234"/>
    </source>
</evidence>
<evidence type="ECO:0000250" key="3">
    <source>
        <dbReference type="UniProtKB" id="P26618"/>
    </source>
</evidence>
<evidence type="ECO:0000255" key="4"/>
<evidence type="ECO:0000255" key="5">
    <source>
        <dbReference type="PROSITE-ProRule" id="PRU00114"/>
    </source>
</evidence>
<evidence type="ECO:0000255" key="6">
    <source>
        <dbReference type="PROSITE-ProRule" id="PRU00159"/>
    </source>
</evidence>
<evidence type="ECO:0000255" key="7">
    <source>
        <dbReference type="PROSITE-ProRule" id="PRU10028"/>
    </source>
</evidence>
<evidence type="ECO:0000256" key="8">
    <source>
        <dbReference type="SAM" id="MobiDB-lite"/>
    </source>
</evidence>
<reference key="1">
    <citation type="journal article" date="1993" name="Dev. Genet.">
        <title>The Xenopus platelet-derived growth factor alpha receptor: cDNA cloning and demonstration that mesoderm induction establishes the lineage-specific pattern of ligand and receptor gene expression.</title>
        <authorList>
            <person name="Jones S.D."/>
            <person name="Ho L."/>
            <person name="Smith J.C."/>
            <person name="Yordan C."/>
            <person name="Stiles C.D."/>
            <person name="Mercola M."/>
        </authorList>
    </citation>
    <scope>NUCLEOTIDE SEQUENCE [MRNA]</scope>
</reference>
<feature type="signal peptide" evidence="4">
    <location>
        <begin position="1"/>
        <end position="24"/>
    </location>
</feature>
<feature type="chain" id="PRO_0000016763" description="Platelet-derived growth factor receptor alpha">
    <location>
        <begin position="25"/>
        <end position="1087"/>
    </location>
</feature>
<feature type="topological domain" description="Extracellular" evidence="4">
    <location>
        <begin position="25"/>
        <end position="530"/>
    </location>
</feature>
<feature type="transmembrane region" description="Helical" evidence="4">
    <location>
        <begin position="531"/>
        <end position="551"/>
    </location>
</feature>
<feature type="topological domain" description="Cytoplasmic" evidence="4">
    <location>
        <begin position="552"/>
        <end position="1087"/>
    </location>
</feature>
<feature type="domain" description="Ig-like C2-type 1">
    <location>
        <begin position="27"/>
        <end position="114"/>
    </location>
</feature>
<feature type="domain" description="Ig-like C2-type 2">
    <location>
        <begin position="118"/>
        <end position="211"/>
    </location>
</feature>
<feature type="domain" description="Ig-like C2-type 3">
    <location>
        <begin position="217"/>
        <end position="309"/>
    </location>
</feature>
<feature type="domain" description="Ig-like C2-type 4">
    <location>
        <begin position="315"/>
        <end position="409"/>
    </location>
</feature>
<feature type="domain" description="Ig-like C2-type 5">
    <location>
        <begin position="417"/>
        <end position="519"/>
    </location>
</feature>
<feature type="domain" description="Protein kinase" evidence="6">
    <location>
        <begin position="595"/>
        <end position="970"/>
    </location>
</feature>
<feature type="region of interest" description="Disordered" evidence="8">
    <location>
        <begin position="1017"/>
        <end position="1064"/>
    </location>
</feature>
<feature type="compositionally biased region" description="Polar residues" evidence="8">
    <location>
        <begin position="1039"/>
        <end position="1057"/>
    </location>
</feature>
<feature type="active site" description="Proton acceptor" evidence="6 7">
    <location>
        <position position="818"/>
    </location>
</feature>
<feature type="binding site" evidence="6">
    <location>
        <begin position="601"/>
        <end position="609"/>
    </location>
    <ligand>
        <name>ATP</name>
        <dbReference type="ChEBI" id="CHEBI:30616"/>
    </ligand>
</feature>
<feature type="binding site" evidence="6">
    <location>
        <position position="629"/>
    </location>
    <ligand>
        <name>ATP</name>
        <dbReference type="ChEBI" id="CHEBI:30616"/>
    </ligand>
</feature>
<feature type="modified residue" description="Phosphotyrosine; by autocatalysis" evidence="1">
    <location>
        <position position="574"/>
    </location>
</feature>
<feature type="modified residue" description="Phosphotyrosine; by autocatalysis" evidence="1">
    <location>
        <position position="576"/>
    </location>
</feature>
<feature type="modified residue" description="Phosphotyrosine; by autocatalysis" evidence="1">
    <location>
        <position position="722"/>
    </location>
</feature>
<feature type="modified residue" description="Phosphotyrosine; by autocatalysis" evidence="1">
    <location>
        <position position="733"/>
    </location>
</feature>
<feature type="modified residue" description="Phosphotyrosine; by autocatalysis" evidence="1">
    <location>
        <position position="744"/>
    </location>
</feature>
<feature type="modified residue" description="Phosphotyrosine; by autocatalysis" evidence="1">
    <location>
        <position position="756"/>
    </location>
</feature>
<feature type="modified residue" description="Phosphotyrosine; by autocatalysis" evidence="1">
    <location>
        <position position="764"/>
    </location>
</feature>
<feature type="modified residue" description="Phosphotyrosine; by autocatalysis" evidence="1">
    <location>
        <position position="849"/>
    </location>
</feature>
<feature type="modified residue" description="Phosphotyrosine; by autocatalysis" evidence="1">
    <location>
        <position position="988"/>
    </location>
</feature>
<feature type="modified residue" description="Phosphotyrosine; by autocatalysis" evidence="1">
    <location>
        <position position="1017"/>
    </location>
</feature>
<feature type="glycosylation site" description="N-linked (GlcNAc...) asparagine" evidence="4">
    <location>
        <position position="77"/>
    </location>
</feature>
<feature type="glycosylation site" description="N-linked (GlcNAc...) asparagine" evidence="4">
    <location>
        <position position="104"/>
    </location>
</feature>
<feature type="glycosylation site" description="N-linked (GlcNAc...) asparagine" evidence="4">
    <location>
        <position position="216"/>
    </location>
</feature>
<feature type="glycosylation site" description="N-linked (GlcNAc...) asparagine" evidence="4">
    <location>
        <position position="282"/>
    </location>
</feature>
<feature type="glycosylation site" description="N-linked (GlcNAc...) asparagine" evidence="4">
    <location>
        <position position="309"/>
    </location>
</feature>
<feature type="glycosylation site" description="N-linked (GlcNAc...) asparagine" evidence="4">
    <location>
        <position position="356"/>
    </location>
</feature>
<feature type="glycosylation site" description="N-linked (GlcNAc...) asparagine" evidence="4">
    <location>
        <position position="362"/>
    </location>
</feature>
<feature type="glycosylation site" description="N-linked (GlcNAc...) asparagine" evidence="4">
    <location>
        <position position="461"/>
    </location>
</feature>
<feature type="glycosylation site" description="N-linked (GlcNAc...) asparagine" evidence="4">
    <location>
        <position position="471"/>
    </location>
</feature>
<feature type="disulfide bond" evidence="5">
    <location>
        <begin position="50"/>
        <end position="101"/>
    </location>
</feature>
<feature type="disulfide bond" evidence="5">
    <location>
        <begin position="151"/>
        <end position="192"/>
    </location>
</feature>
<feature type="disulfide bond" evidence="5">
    <location>
        <begin position="238"/>
        <end position="293"/>
    </location>
</feature>
<feature type="disulfide bond" evidence="5">
    <location>
        <begin position="438"/>
        <end position="503"/>
    </location>
</feature>
<comment type="function">
    <text evidence="1">Tyrosine-protein kinase that acts as a cell-surface receptor for pdgfa, pdgfb and pdgfc and plays an essential role in the regulation of embryonic development, cell proliferation, survival and chemotaxis. Depending on the context, promotes or inhibits cell proliferation and cell migration. Plays an important role in the differentiation of bone marrow-derived mesenchymal stem cells. Required for normal skeleton development. Required for normal development of the gastrointestinal tract. Plays a role in cell migration and chemotaxis in wound healing. Plays a role in platelet activation, secretion of agonists from platelet granules, and in thrombin-induced platelet aggregation. Binding of its cognate ligands - homodimeric pdgfa, homodimeric pdgfb, heterodimers formed by pdgfa and pdgfb or homodimeric pdgfc -leads to the activation of several signaling cascades; the response depends on the nature of the bound ligand and is modulated by the formation of heterodimers between pdgfra and pdgfrb. Phosphorylates pik3r1, plcg1, and ptpn11. Activation of plcg1 leads to the production of the cellular signaling molecules diacylglycerol and inositol 1,4,5-trisphosphate, mobilization of cytosolic Ca(2+) and the activation of protein kinase C. Phosphorylates pik3r1, the regulatory subunit of phosphatidylinositol 3-kinase, and thereby mediates activation of the akt1 signaling pathway. Mediates activation of hras and of the MAP kinases mapk1/erk2 and/or mapk3/erk1. Promotes activation of stat family members stat1, stat3 and stat5a and/or stat5b. Receptor signaling is down-regulated by protein phosphatases that dephosphorylate the receptor and its down-stream effectors, and by rapid internalization of the activated receptor (By similarity).</text>
</comment>
<comment type="catalytic activity">
    <reaction evidence="7">
        <text>L-tyrosyl-[protein] + ATP = O-phospho-L-tyrosyl-[protein] + ADP + H(+)</text>
        <dbReference type="Rhea" id="RHEA:10596"/>
        <dbReference type="Rhea" id="RHEA-COMP:10136"/>
        <dbReference type="Rhea" id="RHEA-COMP:20101"/>
        <dbReference type="ChEBI" id="CHEBI:15378"/>
        <dbReference type="ChEBI" id="CHEBI:30616"/>
        <dbReference type="ChEBI" id="CHEBI:46858"/>
        <dbReference type="ChEBI" id="CHEBI:61978"/>
        <dbReference type="ChEBI" id="CHEBI:456216"/>
        <dbReference type="EC" id="2.7.10.1"/>
    </reaction>
</comment>
<comment type="activity regulation">
    <text evidence="1">Present in an inactive conformation in the absence of bound ligand. Binding of pdgfa and/or pdgfb leads to dimerization and activation by autophosphorylation on tyrosine residues (By similarity).</text>
</comment>
<comment type="subunit">
    <text evidence="1">Interacts with homodimeric pdgfa, pdgfb and pdgfc, and with heterodimers formed by pdgfa and pdgfb. Monomer in the absence of bound ligand. Interaction with dimeric pdgfa, pdgfb and/or pdgfc leads to receptor dimerization, where both pdgfra homodimers and heterodimers with pdgfrb are observed (By similarity).</text>
</comment>
<comment type="subcellular location">
    <subcellularLocation>
        <location evidence="2">Cell membrane</location>
        <topology evidence="2">Single-pass type I membrane protein</topology>
    </subcellularLocation>
    <subcellularLocation>
        <location evidence="3">Cell projection</location>
        <location evidence="3">Cilium</location>
    </subcellularLocation>
    <subcellularLocation>
        <location evidence="3">Golgi apparatus</location>
    </subcellularLocation>
</comment>
<comment type="PTM">
    <text evidence="3">Ubiquitinated, leading to its internalization and degradation.</text>
</comment>
<comment type="PTM">
    <text evidence="1">Autophosphorylated on tyrosine residues upon ligand binding. Autophosphorylation occurs in trans, i.e. one subunit of the dimeric receptor phosphorylates tyrosine residues on the other subunit (By similarity).</text>
</comment>
<comment type="similarity">
    <text evidence="6">Belongs to the protein kinase superfamily. Tyr protein kinase family. CSF-1/PDGF receptor subfamily.</text>
</comment>
<name>PGFRA_XENLA</name>